<dbReference type="EMBL" id="CP001337">
    <property type="protein sequence ID" value="ACL25719.1"/>
    <property type="molecule type" value="Genomic_DNA"/>
</dbReference>
<dbReference type="RefSeq" id="WP_015941575.1">
    <property type="nucleotide sequence ID" value="NC_011831.1"/>
</dbReference>
<dbReference type="SMR" id="B8G5Y6"/>
<dbReference type="STRING" id="326427.Cagg_2857"/>
<dbReference type="KEGG" id="cag:Cagg_2857"/>
<dbReference type="eggNOG" id="COG1589">
    <property type="taxonomic scope" value="Bacteria"/>
</dbReference>
<dbReference type="HOGENOM" id="CLU_1021937_0_0_0"/>
<dbReference type="OrthoDB" id="9783091at2"/>
<dbReference type="Proteomes" id="UP000002508">
    <property type="component" value="Chromosome"/>
</dbReference>
<dbReference type="GO" id="GO:0032153">
    <property type="term" value="C:cell division site"/>
    <property type="evidence" value="ECO:0007669"/>
    <property type="project" value="UniProtKB-UniRule"/>
</dbReference>
<dbReference type="GO" id="GO:0005886">
    <property type="term" value="C:plasma membrane"/>
    <property type="evidence" value="ECO:0007669"/>
    <property type="project" value="UniProtKB-SubCell"/>
</dbReference>
<dbReference type="GO" id="GO:0090529">
    <property type="term" value="P:cell septum assembly"/>
    <property type="evidence" value="ECO:0007669"/>
    <property type="project" value="InterPro"/>
</dbReference>
<dbReference type="GO" id="GO:0043093">
    <property type="term" value="P:FtsZ-dependent cytokinesis"/>
    <property type="evidence" value="ECO:0007669"/>
    <property type="project" value="UniProtKB-UniRule"/>
</dbReference>
<dbReference type="HAMAP" id="MF_00911">
    <property type="entry name" value="FtsQ_subfam"/>
    <property type="match status" value="1"/>
</dbReference>
<dbReference type="InterPro" id="IPR005548">
    <property type="entry name" value="Cell_div_FtsQ/DivIB_C"/>
</dbReference>
<dbReference type="InterPro" id="IPR026579">
    <property type="entry name" value="FtsQ"/>
</dbReference>
<dbReference type="InterPro" id="IPR050487">
    <property type="entry name" value="FtsQ_DivIB"/>
</dbReference>
<dbReference type="InterPro" id="IPR034746">
    <property type="entry name" value="POTRA"/>
</dbReference>
<dbReference type="InterPro" id="IPR013685">
    <property type="entry name" value="POTRA_FtsQ_type"/>
</dbReference>
<dbReference type="PANTHER" id="PTHR37820">
    <property type="entry name" value="CELL DIVISION PROTEIN DIVIB"/>
    <property type="match status" value="1"/>
</dbReference>
<dbReference type="PANTHER" id="PTHR37820:SF1">
    <property type="entry name" value="CELL DIVISION PROTEIN FTSQ"/>
    <property type="match status" value="1"/>
</dbReference>
<dbReference type="Pfam" id="PF03799">
    <property type="entry name" value="FtsQ_DivIB_C"/>
    <property type="match status" value="1"/>
</dbReference>
<dbReference type="Pfam" id="PF08478">
    <property type="entry name" value="POTRA_1"/>
    <property type="match status" value="1"/>
</dbReference>
<dbReference type="PROSITE" id="PS51779">
    <property type="entry name" value="POTRA"/>
    <property type="match status" value="1"/>
</dbReference>
<proteinExistence type="inferred from homology"/>
<evidence type="ECO:0000255" key="1">
    <source>
        <dbReference type="HAMAP-Rule" id="MF_00911"/>
    </source>
</evidence>
<evidence type="ECO:0000255" key="2">
    <source>
        <dbReference type="PROSITE-ProRule" id="PRU01115"/>
    </source>
</evidence>
<gene>
    <name evidence="1" type="primary">ftsQ</name>
    <name type="ordered locus">Cagg_2857</name>
</gene>
<reference key="1">
    <citation type="submission" date="2008-12" db="EMBL/GenBank/DDBJ databases">
        <title>Complete sequence of Chloroflexus aggregans DSM 9485.</title>
        <authorList>
            <consortium name="US DOE Joint Genome Institute"/>
            <person name="Lucas S."/>
            <person name="Copeland A."/>
            <person name="Lapidus A."/>
            <person name="Glavina del Rio T."/>
            <person name="Dalin E."/>
            <person name="Tice H."/>
            <person name="Pitluck S."/>
            <person name="Foster B."/>
            <person name="Larimer F."/>
            <person name="Land M."/>
            <person name="Hauser L."/>
            <person name="Kyrpides N."/>
            <person name="Mikhailova N."/>
            <person name="Bryant D.A."/>
            <person name="Richardson P."/>
        </authorList>
    </citation>
    <scope>NUCLEOTIDE SEQUENCE [LARGE SCALE GENOMIC DNA]</scope>
    <source>
        <strain>MD-66 / DSM 9485</strain>
    </source>
</reference>
<name>FTSQ_CHLAD</name>
<accession>B8G5Y6</accession>
<sequence>MEYNPPNTRERIAARRQRLRQPSSEPAIPGWRRRFIDGLQSGRIVSGAVFVVSCLALFYVLFSSQFRVQTVEVVGVEFLSPERIVNAVPLRGWPIWLIDEEQAVAPLLRSPFVEHARLSLILPDRARIVIVERQPVIYWRSGGVDYLVDRQGFVIEPATVAPPADALVIVDSSNLPVEPQMQLDPDALALARELAWRLPNELGLRPAQIGWDFGLGVFIRTEQDQMVVFGRSERLTRKLMILAYLLNDGTPFTYLDLRPMNPFYQNRTDGRS</sequence>
<keyword id="KW-0131">Cell cycle</keyword>
<keyword id="KW-0132">Cell division</keyword>
<keyword id="KW-1003">Cell membrane</keyword>
<keyword id="KW-0472">Membrane</keyword>
<keyword id="KW-0812">Transmembrane</keyword>
<keyword id="KW-1133">Transmembrane helix</keyword>
<protein>
    <recommendedName>
        <fullName evidence="1">Cell division protein FtsQ</fullName>
    </recommendedName>
</protein>
<organism>
    <name type="scientific">Chloroflexus aggregans (strain MD-66 / DSM 9485)</name>
    <dbReference type="NCBI Taxonomy" id="326427"/>
    <lineage>
        <taxon>Bacteria</taxon>
        <taxon>Bacillati</taxon>
        <taxon>Chloroflexota</taxon>
        <taxon>Chloroflexia</taxon>
        <taxon>Chloroflexales</taxon>
        <taxon>Chloroflexineae</taxon>
        <taxon>Chloroflexaceae</taxon>
        <taxon>Chloroflexus</taxon>
    </lineage>
</organism>
<feature type="chain" id="PRO_0000414664" description="Cell division protein FtsQ">
    <location>
        <begin position="1"/>
        <end position="272"/>
    </location>
</feature>
<feature type="topological domain" description="Cytoplasmic" evidence="1">
    <location>
        <begin position="1"/>
        <end position="43"/>
    </location>
</feature>
<feature type="transmembrane region" description="Helical" evidence="1">
    <location>
        <begin position="44"/>
        <end position="64"/>
    </location>
</feature>
<feature type="topological domain" description="Extracellular" evidence="1">
    <location>
        <begin position="65"/>
        <end position="272"/>
    </location>
</feature>
<feature type="domain" description="POTRA" evidence="2">
    <location>
        <begin position="66"/>
        <end position="133"/>
    </location>
</feature>
<comment type="function">
    <text evidence="1">Essential cell division protein.</text>
</comment>
<comment type="subcellular location">
    <subcellularLocation>
        <location evidence="1">Cell membrane</location>
        <topology evidence="1">Single-pass type II membrane protein</topology>
    </subcellularLocation>
    <text evidence="1">Localizes to the division septum.</text>
</comment>
<comment type="similarity">
    <text evidence="1">Belongs to the FtsQ/DivIB family. FtsQ subfamily.</text>
</comment>